<proteinExistence type="inferred from homology"/>
<accession>Q5FQ31</accession>
<dbReference type="EC" id="6.1.1.16" evidence="1"/>
<dbReference type="EMBL" id="CP000009">
    <property type="protein sequence ID" value="AAW61515.1"/>
    <property type="molecule type" value="Genomic_DNA"/>
</dbReference>
<dbReference type="RefSeq" id="WP_011253296.1">
    <property type="nucleotide sequence ID" value="NC_006677.1"/>
</dbReference>
<dbReference type="SMR" id="Q5FQ31"/>
<dbReference type="STRING" id="290633.GOX1776"/>
<dbReference type="KEGG" id="gox:GOX1776"/>
<dbReference type="eggNOG" id="COG0215">
    <property type="taxonomic scope" value="Bacteria"/>
</dbReference>
<dbReference type="HOGENOM" id="CLU_013528_0_1_5"/>
<dbReference type="Proteomes" id="UP000006375">
    <property type="component" value="Chromosome"/>
</dbReference>
<dbReference type="GO" id="GO:0005829">
    <property type="term" value="C:cytosol"/>
    <property type="evidence" value="ECO:0007669"/>
    <property type="project" value="TreeGrafter"/>
</dbReference>
<dbReference type="GO" id="GO:0005524">
    <property type="term" value="F:ATP binding"/>
    <property type="evidence" value="ECO:0007669"/>
    <property type="project" value="UniProtKB-UniRule"/>
</dbReference>
<dbReference type="GO" id="GO:0004817">
    <property type="term" value="F:cysteine-tRNA ligase activity"/>
    <property type="evidence" value="ECO:0007669"/>
    <property type="project" value="UniProtKB-UniRule"/>
</dbReference>
<dbReference type="GO" id="GO:0008270">
    <property type="term" value="F:zinc ion binding"/>
    <property type="evidence" value="ECO:0007669"/>
    <property type="project" value="UniProtKB-UniRule"/>
</dbReference>
<dbReference type="GO" id="GO:0006423">
    <property type="term" value="P:cysteinyl-tRNA aminoacylation"/>
    <property type="evidence" value="ECO:0007669"/>
    <property type="project" value="UniProtKB-UniRule"/>
</dbReference>
<dbReference type="CDD" id="cd00672">
    <property type="entry name" value="CysRS_core"/>
    <property type="match status" value="1"/>
</dbReference>
<dbReference type="FunFam" id="3.40.50.620:FF:000068">
    <property type="entry name" value="Cysteine--tRNA ligase"/>
    <property type="match status" value="1"/>
</dbReference>
<dbReference type="Gene3D" id="1.20.120.1910">
    <property type="entry name" value="Cysteine-tRNA ligase, C-terminal anti-codon recognition domain"/>
    <property type="match status" value="1"/>
</dbReference>
<dbReference type="Gene3D" id="3.40.50.620">
    <property type="entry name" value="HUPs"/>
    <property type="match status" value="1"/>
</dbReference>
<dbReference type="HAMAP" id="MF_00041">
    <property type="entry name" value="Cys_tRNA_synth"/>
    <property type="match status" value="1"/>
</dbReference>
<dbReference type="InterPro" id="IPR015803">
    <property type="entry name" value="Cys-tRNA-ligase"/>
</dbReference>
<dbReference type="InterPro" id="IPR015273">
    <property type="entry name" value="Cys-tRNA-synt_Ia_DALR"/>
</dbReference>
<dbReference type="InterPro" id="IPR024909">
    <property type="entry name" value="Cys-tRNA/MSH_ligase"/>
</dbReference>
<dbReference type="InterPro" id="IPR056411">
    <property type="entry name" value="CysS_C"/>
</dbReference>
<dbReference type="InterPro" id="IPR014729">
    <property type="entry name" value="Rossmann-like_a/b/a_fold"/>
</dbReference>
<dbReference type="InterPro" id="IPR032678">
    <property type="entry name" value="tRNA-synt_1_cat_dom"/>
</dbReference>
<dbReference type="InterPro" id="IPR009080">
    <property type="entry name" value="tRNAsynth_Ia_anticodon-bd"/>
</dbReference>
<dbReference type="NCBIfam" id="TIGR00435">
    <property type="entry name" value="cysS"/>
    <property type="match status" value="1"/>
</dbReference>
<dbReference type="PANTHER" id="PTHR10890:SF3">
    <property type="entry name" value="CYSTEINE--TRNA LIGASE, CYTOPLASMIC"/>
    <property type="match status" value="1"/>
</dbReference>
<dbReference type="PANTHER" id="PTHR10890">
    <property type="entry name" value="CYSTEINYL-TRNA SYNTHETASE"/>
    <property type="match status" value="1"/>
</dbReference>
<dbReference type="Pfam" id="PF23493">
    <property type="entry name" value="CysS_C"/>
    <property type="match status" value="1"/>
</dbReference>
<dbReference type="Pfam" id="PF09190">
    <property type="entry name" value="DALR_2"/>
    <property type="match status" value="1"/>
</dbReference>
<dbReference type="Pfam" id="PF01406">
    <property type="entry name" value="tRNA-synt_1e"/>
    <property type="match status" value="1"/>
</dbReference>
<dbReference type="PRINTS" id="PR00983">
    <property type="entry name" value="TRNASYNTHCYS"/>
</dbReference>
<dbReference type="SMART" id="SM00840">
    <property type="entry name" value="DALR_2"/>
    <property type="match status" value="1"/>
</dbReference>
<dbReference type="SUPFAM" id="SSF47323">
    <property type="entry name" value="Anticodon-binding domain of a subclass of class I aminoacyl-tRNA synthetases"/>
    <property type="match status" value="1"/>
</dbReference>
<dbReference type="SUPFAM" id="SSF52374">
    <property type="entry name" value="Nucleotidylyl transferase"/>
    <property type="match status" value="1"/>
</dbReference>
<comment type="catalytic activity">
    <reaction evidence="1">
        <text>tRNA(Cys) + L-cysteine + ATP = L-cysteinyl-tRNA(Cys) + AMP + diphosphate</text>
        <dbReference type="Rhea" id="RHEA:17773"/>
        <dbReference type="Rhea" id="RHEA-COMP:9661"/>
        <dbReference type="Rhea" id="RHEA-COMP:9679"/>
        <dbReference type="ChEBI" id="CHEBI:30616"/>
        <dbReference type="ChEBI" id="CHEBI:33019"/>
        <dbReference type="ChEBI" id="CHEBI:35235"/>
        <dbReference type="ChEBI" id="CHEBI:78442"/>
        <dbReference type="ChEBI" id="CHEBI:78517"/>
        <dbReference type="ChEBI" id="CHEBI:456215"/>
        <dbReference type="EC" id="6.1.1.16"/>
    </reaction>
</comment>
<comment type="cofactor">
    <cofactor evidence="1">
        <name>Zn(2+)</name>
        <dbReference type="ChEBI" id="CHEBI:29105"/>
    </cofactor>
    <text evidence="1">Binds 1 zinc ion per subunit.</text>
</comment>
<comment type="subunit">
    <text evidence="1">Monomer.</text>
</comment>
<comment type="subcellular location">
    <subcellularLocation>
        <location evidence="1">Cytoplasm</location>
    </subcellularLocation>
</comment>
<comment type="similarity">
    <text evidence="1">Belongs to the class-I aminoacyl-tRNA synthetase family.</text>
</comment>
<organism>
    <name type="scientific">Gluconobacter oxydans (strain 621H)</name>
    <name type="common">Gluconobacter suboxydans</name>
    <dbReference type="NCBI Taxonomy" id="290633"/>
    <lineage>
        <taxon>Bacteria</taxon>
        <taxon>Pseudomonadati</taxon>
        <taxon>Pseudomonadota</taxon>
        <taxon>Alphaproteobacteria</taxon>
        <taxon>Acetobacterales</taxon>
        <taxon>Acetobacteraceae</taxon>
        <taxon>Gluconobacter</taxon>
    </lineage>
</organism>
<reference key="1">
    <citation type="journal article" date="2005" name="Nat. Biotechnol.">
        <title>Complete genome sequence of the acetic acid bacterium Gluconobacter oxydans.</title>
        <authorList>
            <person name="Prust C."/>
            <person name="Hoffmeister M."/>
            <person name="Liesegang H."/>
            <person name="Wiezer A."/>
            <person name="Fricke W.F."/>
            <person name="Ehrenreich A."/>
            <person name="Gottschalk G."/>
            <person name="Deppenmeier U."/>
        </authorList>
    </citation>
    <scope>NUCLEOTIDE SEQUENCE [LARGE SCALE GENOMIC DNA]</scope>
    <source>
        <strain>621H</strain>
    </source>
</reference>
<name>SYC_GLUOX</name>
<keyword id="KW-0030">Aminoacyl-tRNA synthetase</keyword>
<keyword id="KW-0067">ATP-binding</keyword>
<keyword id="KW-0963">Cytoplasm</keyword>
<keyword id="KW-0436">Ligase</keyword>
<keyword id="KW-0479">Metal-binding</keyword>
<keyword id="KW-0547">Nucleotide-binding</keyword>
<keyword id="KW-0648">Protein biosynthesis</keyword>
<keyword id="KW-1185">Reference proteome</keyword>
<keyword id="KW-0862">Zinc</keyword>
<protein>
    <recommendedName>
        <fullName evidence="1">Cysteine--tRNA ligase</fullName>
        <ecNumber evidence="1">6.1.1.16</ecNumber>
    </recommendedName>
    <alternativeName>
        <fullName evidence="1">Cysteinyl-tRNA synthetase</fullName>
        <shortName evidence="1">CysRS</shortName>
    </alternativeName>
</protein>
<feature type="chain" id="PRO_0000159404" description="Cysteine--tRNA ligase">
    <location>
        <begin position="1"/>
        <end position="452"/>
    </location>
</feature>
<feature type="short sequence motif" description="'HIGH' region">
    <location>
        <begin position="37"/>
        <end position="47"/>
    </location>
</feature>
<feature type="short sequence motif" description="'KMSKS' region">
    <location>
        <begin position="273"/>
        <end position="277"/>
    </location>
</feature>
<feature type="binding site" evidence="1">
    <location>
        <position position="35"/>
    </location>
    <ligand>
        <name>Zn(2+)</name>
        <dbReference type="ChEBI" id="CHEBI:29105"/>
    </ligand>
</feature>
<feature type="binding site" evidence="1">
    <location>
        <position position="215"/>
    </location>
    <ligand>
        <name>Zn(2+)</name>
        <dbReference type="ChEBI" id="CHEBI:29105"/>
    </ligand>
</feature>
<feature type="binding site" evidence="1">
    <location>
        <position position="240"/>
    </location>
    <ligand>
        <name>Zn(2+)</name>
        <dbReference type="ChEBI" id="CHEBI:29105"/>
    </ligand>
</feature>
<feature type="binding site" evidence="1">
    <location>
        <position position="244"/>
    </location>
    <ligand>
        <name>Zn(2+)</name>
        <dbReference type="ChEBI" id="CHEBI:29105"/>
    </ligand>
</feature>
<feature type="binding site" evidence="1">
    <location>
        <position position="276"/>
    </location>
    <ligand>
        <name>ATP</name>
        <dbReference type="ChEBI" id="CHEBI:30616"/>
    </ligand>
</feature>
<sequence>MADPASNVLRLHDTHLRDKRPFTPLDPENVRVYFCGPTVYDRAHLGNLRAMMCADILIRLLRTMYPRVTYVRNVTDVDDKINARAKENGEDISALTERTTQAFHEDLASLFILPPDIEPRATHHIDDMLEMIGRLVENGHAYVAEGHVLFAVRNFPSYGELSGRSLDDMIAGARVEVAPYKRDPGDFVLWKPSEPDLPGWDSPYGRGRPGWHIECSAMSHRYLGESFDIHGGGDDLLFPHHENERAQSMCCYPHGKFATHWVHNGMLLSNGEKMSKSLGNFFTIREVLDRSPAEPLRLLYLGAHYRSTLDFSWEKLEEARRVLDRLYRALERGNAQPGTALPAAVMDALCDDLNTPLAIAALHPLADAAMQGDQDAASSLLAAGKLLGLFNVTPAEWFQSGVDASAIEKLIEERLAARKSRDFARADAIRAQLAADGITLEDGPGGTTWRKA</sequence>
<evidence type="ECO:0000255" key="1">
    <source>
        <dbReference type="HAMAP-Rule" id="MF_00041"/>
    </source>
</evidence>
<gene>
    <name evidence="1" type="primary">cysS</name>
    <name type="ordered locus">GOX1776</name>
</gene>